<keyword id="KW-0131">Cell cycle</keyword>
<keyword id="KW-0132">Cell division</keyword>
<keyword id="KW-0195">Cyclin</keyword>
<keyword id="KW-1185">Reference proteome</keyword>
<gene>
    <name type="primary">CLB5</name>
    <name type="ordered locus">YPR120C</name>
    <name type="ORF">P9642.8</name>
</gene>
<comment type="function">
    <text>Required for efficient progression through S phase and possibly for the normal progression through meiosis. Interacts with CDC28.</text>
</comment>
<comment type="interaction">
    <interactant intactId="EBI-4538">
        <id>P30283</id>
    </interactant>
    <interactant intactId="EBI-4253">
        <id>P00546</id>
        <label>CDC28</label>
    </interactant>
    <organismsDiffer>false</organismsDiffer>
    <experiments>6</experiments>
</comment>
<comment type="developmental stage">
    <text>Maximally expressed just before cell cycle start.</text>
</comment>
<comment type="miscellaneous">
    <text evidence="2">Present with 521 molecules/cell in log phase SD medium.</text>
</comment>
<comment type="similarity">
    <text evidence="3">Belongs to the cyclin family. Cyclin AB subfamily.</text>
</comment>
<organism>
    <name type="scientific">Saccharomyces cerevisiae (strain ATCC 204508 / S288c)</name>
    <name type="common">Baker's yeast</name>
    <dbReference type="NCBI Taxonomy" id="559292"/>
    <lineage>
        <taxon>Eukaryota</taxon>
        <taxon>Fungi</taxon>
        <taxon>Dikarya</taxon>
        <taxon>Ascomycota</taxon>
        <taxon>Saccharomycotina</taxon>
        <taxon>Saccharomycetes</taxon>
        <taxon>Saccharomycetales</taxon>
        <taxon>Saccharomycetaceae</taxon>
        <taxon>Saccharomyces</taxon>
    </lineage>
</organism>
<dbReference type="EMBL" id="M91209">
    <property type="protein sequence ID" value="AAA34503.1"/>
    <property type="molecule type" value="Genomic_DNA"/>
</dbReference>
<dbReference type="EMBL" id="X70435">
    <property type="protein sequence ID" value="CAA49893.1"/>
    <property type="molecule type" value="Genomic_DNA"/>
</dbReference>
<dbReference type="EMBL" id="U40828">
    <property type="protein sequence ID" value="AAB68061.1"/>
    <property type="molecule type" value="Genomic_DNA"/>
</dbReference>
<dbReference type="EMBL" id="BK006949">
    <property type="protein sequence ID" value="DAA11535.1"/>
    <property type="molecule type" value="Genomic_DNA"/>
</dbReference>
<dbReference type="PIR" id="S31290">
    <property type="entry name" value="S31290"/>
</dbReference>
<dbReference type="RefSeq" id="NP_015445.1">
    <property type="nucleotide sequence ID" value="NM_001184217.1"/>
</dbReference>
<dbReference type="SMR" id="P30283"/>
<dbReference type="BioGRID" id="36288">
    <property type="interactions" value="332"/>
</dbReference>
<dbReference type="ComplexPortal" id="CPX-1702">
    <property type="entry name" value="CLB5-CDC28 kinase complex"/>
</dbReference>
<dbReference type="DIP" id="DIP-2710N"/>
<dbReference type="ELM" id="P30283"/>
<dbReference type="FunCoup" id="P30283">
    <property type="interactions" value="672"/>
</dbReference>
<dbReference type="IntAct" id="P30283">
    <property type="interactions" value="24"/>
</dbReference>
<dbReference type="MINT" id="P30283"/>
<dbReference type="STRING" id="4932.YPR120C"/>
<dbReference type="iPTMnet" id="P30283"/>
<dbReference type="PaxDb" id="4932-YPR120C"/>
<dbReference type="PeptideAtlas" id="P30283"/>
<dbReference type="EnsemblFungi" id="YPR120C_mRNA">
    <property type="protein sequence ID" value="YPR120C"/>
    <property type="gene ID" value="YPR120C"/>
</dbReference>
<dbReference type="GeneID" id="856237"/>
<dbReference type="KEGG" id="sce:YPR120C"/>
<dbReference type="AGR" id="SGD:S000006324"/>
<dbReference type="SGD" id="S000006324">
    <property type="gene designation" value="CLB5"/>
</dbReference>
<dbReference type="VEuPathDB" id="FungiDB:YPR120C"/>
<dbReference type="eggNOG" id="KOG0653">
    <property type="taxonomic scope" value="Eukaryota"/>
</dbReference>
<dbReference type="GeneTree" id="ENSGT00940000176489"/>
<dbReference type="HOGENOM" id="CLU_020695_12_4_1"/>
<dbReference type="InParanoid" id="P30283"/>
<dbReference type="OMA" id="KNAEMFM"/>
<dbReference type="OrthoDB" id="5590282at2759"/>
<dbReference type="BioCyc" id="YEAST:G3O-34259-MONOMER"/>
<dbReference type="BioGRID-ORCS" id="856237">
    <property type="hits" value="0 hits in 10 CRISPR screens"/>
</dbReference>
<dbReference type="CD-CODE" id="876000F7">
    <property type="entry name" value="Centrosome"/>
</dbReference>
<dbReference type="PRO" id="PR:P30283"/>
<dbReference type="Proteomes" id="UP000002311">
    <property type="component" value="Chromosome XVI"/>
</dbReference>
<dbReference type="RNAct" id="P30283">
    <property type="molecule type" value="protein"/>
</dbReference>
<dbReference type="GO" id="GO:0000307">
    <property type="term" value="C:cyclin-dependent protein kinase holoenzyme complex"/>
    <property type="evidence" value="ECO:0000353"/>
    <property type="project" value="ComplexPortal"/>
</dbReference>
<dbReference type="GO" id="GO:0005737">
    <property type="term" value="C:cytoplasm"/>
    <property type="evidence" value="ECO:0000318"/>
    <property type="project" value="GO_Central"/>
</dbReference>
<dbReference type="GO" id="GO:0005815">
    <property type="term" value="C:microtubule organizing center"/>
    <property type="evidence" value="ECO:0000318"/>
    <property type="project" value="GO_Central"/>
</dbReference>
<dbReference type="GO" id="GO:0005634">
    <property type="term" value="C:nucleus"/>
    <property type="evidence" value="ECO:0000314"/>
    <property type="project" value="SGD"/>
</dbReference>
<dbReference type="GO" id="GO:0016538">
    <property type="term" value="F:cyclin-dependent protein serine/threonine kinase regulator activity"/>
    <property type="evidence" value="ECO:0000314"/>
    <property type="project" value="SGD"/>
</dbReference>
<dbReference type="GO" id="GO:0051301">
    <property type="term" value="P:cell division"/>
    <property type="evidence" value="ECO:0007669"/>
    <property type="project" value="UniProtKB-KW"/>
</dbReference>
<dbReference type="GO" id="GO:0006974">
    <property type="term" value="P:DNA damage response"/>
    <property type="evidence" value="ECO:0000314"/>
    <property type="project" value="ComplexPortal"/>
</dbReference>
<dbReference type="GO" id="GO:0000082">
    <property type="term" value="P:G1/S transition of mitotic cell cycle"/>
    <property type="evidence" value="ECO:0000315"/>
    <property type="project" value="SGD"/>
</dbReference>
<dbReference type="GO" id="GO:0000086">
    <property type="term" value="P:G2/M transition of mitotic cell cycle"/>
    <property type="evidence" value="ECO:0000315"/>
    <property type="project" value="SGD"/>
</dbReference>
<dbReference type="GO" id="GO:0045740">
    <property type="term" value="P:positive regulation of DNA replication"/>
    <property type="evidence" value="ECO:0000315"/>
    <property type="project" value="SGD"/>
</dbReference>
<dbReference type="GO" id="GO:0010696">
    <property type="term" value="P:positive regulation of mitotic spindle pole body separation"/>
    <property type="evidence" value="ECO:0000316"/>
    <property type="project" value="SGD"/>
</dbReference>
<dbReference type="GO" id="GO:0006279">
    <property type="term" value="P:premeiotic DNA replication"/>
    <property type="evidence" value="ECO:0000315"/>
    <property type="project" value="SGD"/>
</dbReference>
<dbReference type="GO" id="GO:0006355">
    <property type="term" value="P:regulation of DNA-templated transcription"/>
    <property type="evidence" value="ECO:0000315"/>
    <property type="project" value="ComplexPortal"/>
</dbReference>
<dbReference type="GO" id="GO:1901673">
    <property type="term" value="P:regulation of mitotic spindle assembly"/>
    <property type="evidence" value="ECO:0000316"/>
    <property type="project" value="SGD"/>
</dbReference>
<dbReference type="GO" id="GO:0007089">
    <property type="term" value="P:traversing start control point of mitotic cell cycle"/>
    <property type="evidence" value="ECO:0000318"/>
    <property type="project" value="GO_Central"/>
</dbReference>
<dbReference type="CDD" id="cd20512">
    <property type="entry name" value="CYCLIN_CLBs_yeast_rpt2"/>
    <property type="match status" value="1"/>
</dbReference>
<dbReference type="FunFam" id="1.10.472.10:FF:000001">
    <property type="entry name" value="G2/mitotic-specific cyclin"/>
    <property type="match status" value="1"/>
</dbReference>
<dbReference type="Gene3D" id="1.10.472.10">
    <property type="entry name" value="Cyclin-like"/>
    <property type="match status" value="2"/>
</dbReference>
<dbReference type="InterPro" id="IPR039361">
    <property type="entry name" value="Cyclin"/>
</dbReference>
<dbReference type="InterPro" id="IPR013763">
    <property type="entry name" value="Cyclin-like_dom"/>
</dbReference>
<dbReference type="InterPro" id="IPR036915">
    <property type="entry name" value="Cyclin-like_sf"/>
</dbReference>
<dbReference type="InterPro" id="IPR046965">
    <property type="entry name" value="Cyclin_A/B-like"/>
</dbReference>
<dbReference type="InterPro" id="IPR004367">
    <property type="entry name" value="Cyclin_C-dom"/>
</dbReference>
<dbReference type="InterPro" id="IPR006671">
    <property type="entry name" value="Cyclin_N"/>
</dbReference>
<dbReference type="InterPro" id="IPR048258">
    <property type="entry name" value="Cyclins_cyclin-box"/>
</dbReference>
<dbReference type="PANTHER" id="PTHR10177">
    <property type="entry name" value="CYCLINS"/>
    <property type="match status" value="1"/>
</dbReference>
<dbReference type="Pfam" id="PF02984">
    <property type="entry name" value="Cyclin_C"/>
    <property type="match status" value="1"/>
</dbReference>
<dbReference type="Pfam" id="PF00134">
    <property type="entry name" value="Cyclin_N"/>
    <property type="match status" value="1"/>
</dbReference>
<dbReference type="PIRSF" id="PIRSF001771">
    <property type="entry name" value="Cyclin_A_B_D_E"/>
    <property type="match status" value="1"/>
</dbReference>
<dbReference type="SMART" id="SM00385">
    <property type="entry name" value="CYCLIN"/>
    <property type="match status" value="2"/>
</dbReference>
<dbReference type="SMART" id="SM01332">
    <property type="entry name" value="Cyclin_C"/>
    <property type="match status" value="1"/>
</dbReference>
<dbReference type="SUPFAM" id="SSF47954">
    <property type="entry name" value="Cyclin-like"/>
    <property type="match status" value="2"/>
</dbReference>
<dbReference type="PROSITE" id="PS00292">
    <property type="entry name" value="CYCLINS"/>
    <property type="match status" value="1"/>
</dbReference>
<protein>
    <recommendedName>
        <fullName>S-phase entry cyclin-5</fullName>
    </recommendedName>
</protein>
<sequence length="435" mass="50431">MGENHDHEQSIKRNSMIYNENERQLCNSNLKILQNKRALSKNDSSSKQQVQDSKPRRALTDVPVNNNPLSQNKRIVAGSKAAKVRREENIRPIVSAVQKRQIYNDRTAAEQEEEEEEEGEDDDAASIVNKKRRIDAEGVSEIVGWQDLDYVEKDDTAMVAEYSAEIFAFLYRRELETLPSHNYLLDKTSKYYLRPSMRTILVDWLVEVHEKFQCYPETLFLSINLMDRFLAKNKVTMNKLQLLAVTSLFIAAKFEEVNLPKLAEYAYITDGAASKNDIKNAEMFMLTSLEFNIGWPNPLNFLRRISKADDYDPVNRNIGKFILEYAYCCHQFIHLPPSTVSAMAMYIARRMTNRNKNELWNGTLQHYSGGIDPIHDEAFQSLCIDLVKDIASSKTHLDSLILKYKKPRYGSVYFQTFKWCTSEMHSNFQNLFNLK</sequence>
<feature type="chain" id="PRO_0000080408" description="S-phase entry cyclin-5">
    <location>
        <begin position="1"/>
        <end position="435"/>
    </location>
</feature>
<feature type="region of interest" description="Disordered" evidence="1">
    <location>
        <begin position="36"/>
        <end position="70"/>
    </location>
</feature>
<feature type="region of interest" description="Disordered" evidence="1">
    <location>
        <begin position="104"/>
        <end position="126"/>
    </location>
</feature>
<feature type="compositionally biased region" description="Low complexity" evidence="1">
    <location>
        <begin position="41"/>
        <end position="52"/>
    </location>
</feature>
<feature type="compositionally biased region" description="Acidic residues" evidence="1">
    <location>
        <begin position="110"/>
        <end position="124"/>
    </location>
</feature>
<reference key="1">
    <citation type="journal article" date="1992" name="Genes Dev.">
        <title>CLB5: a novel B cyclin from budding yeast with a role in S phase.</title>
        <authorList>
            <person name="Epstein C.B."/>
            <person name="Cross F.R."/>
        </authorList>
    </citation>
    <scope>NUCLEOTIDE SEQUENCE [GENOMIC DNA]</scope>
    <source>
        <strain>BF264-15D</strain>
    </source>
</reference>
<reference key="2">
    <citation type="journal article" date="1993" name="Genes Dev.">
        <title>CLB5 and CLB6, a new pair of B cyclins involved in DNA replication in Saccharomyces cerevisiae.</title>
        <authorList>
            <person name="Schwob E."/>
            <person name="Nasmyth K."/>
        </authorList>
    </citation>
    <scope>NUCLEOTIDE SEQUENCE [GENOMIC DNA]</scope>
    <source>
        <strain>ATCC 204510 / AB320</strain>
    </source>
</reference>
<reference key="3">
    <citation type="journal article" date="1993" name="EMBO J.">
        <title>A new pair of B-type cyclins from Saccharomyces cerevisiae that function early in the cell cycle.</title>
        <authorList>
            <person name="Kuehne C."/>
            <person name="Linder P."/>
        </authorList>
    </citation>
    <scope>NUCLEOTIDE SEQUENCE [GENOMIC DNA]</scope>
</reference>
<reference key="4">
    <citation type="journal article" date="1997" name="Nature">
        <title>The nucleotide sequence of Saccharomyces cerevisiae chromosome XVI.</title>
        <authorList>
            <person name="Bussey H."/>
            <person name="Storms R.K."/>
            <person name="Ahmed A."/>
            <person name="Albermann K."/>
            <person name="Allen E."/>
            <person name="Ansorge W."/>
            <person name="Araujo R."/>
            <person name="Aparicio A."/>
            <person name="Barrell B.G."/>
            <person name="Badcock K."/>
            <person name="Benes V."/>
            <person name="Botstein D."/>
            <person name="Bowman S."/>
            <person name="Brueckner M."/>
            <person name="Carpenter J."/>
            <person name="Cherry J.M."/>
            <person name="Chung E."/>
            <person name="Churcher C.M."/>
            <person name="Coster F."/>
            <person name="Davis K."/>
            <person name="Davis R.W."/>
            <person name="Dietrich F.S."/>
            <person name="Delius H."/>
            <person name="DiPaolo T."/>
            <person name="Dubois E."/>
            <person name="Duesterhoeft A."/>
            <person name="Duncan M."/>
            <person name="Floeth M."/>
            <person name="Fortin N."/>
            <person name="Friesen J.D."/>
            <person name="Fritz C."/>
            <person name="Goffeau A."/>
            <person name="Hall J."/>
            <person name="Hebling U."/>
            <person name="Heumann K."/>
            <person name="Hilbert H."/>
            <person name="Hillier L.W."/>
            <person name="Hunicke-Smith S."/>
            <person name="Hyman R.W."/>
            <person name="Johnston M."/>
            <person name="Kalman S."/>
            <person name="Kleine K."/>
            <person name="Komp C."/>
            <person name="Kurdi O."/>
            <person name="Lashkari D."/>
            <person name="Lew H."/>
            <person name="Lin A."/>
            <person name="Lin D."/>
            <person name="Louis E.J."/>
            <person name="Marathe R."/>
            <person name="Messenguy F."/>
            <person name="Mewes H.-W."/>
            <person name="Mirtipati S."/>
            <person name="Moestl D."/>
            <person name="Mueller-Auer S."/>
            <person name="Namath A."/>
            <person name="Nentwich U."/>
            <person name="Oefner P."/>
            <person name="Pearson D."/>
            <person name="Petel F.X."/>
            <person name="Pohl T.M."/>
            <person name="Purnelle B."/>
            <person name="Rajandream M.A."/>
            <person name="Rechmann S."/>
            <person name="Rieger M."/>
            <person name="Riles L."/>
            <person name="Roberts D."/>
            <person name="Schaefer M."/>
            <person name="Scharfe M."/>
            <person name="Scherens B."/>
            <person name="Schramm S."/>
            <person name="Schroeder M."/>
            <person name="Sdicu A.-M."/>
            <person name="Tettelin H."/>
            <person name="Urrestarazu L.A."/>
            <person name="Ushinsky S."/>
            <person name="Vierendeels F."/>
            <person name="Vissers S."/>
            <person name="Voss H."/>
            <person name="Walsh S.V."/>
            <person name="Wambutt R."/>
            <person name="Wang Y."/>
            <person name="Wedler E."/>
            <person name="Wedler H."/>
            <person name="Winnett E."/>
            <person name="Zhong W.-W."/>
            <person name="Zollner A."/>
            <person name="Vo D.H."/>
            <person name="Hani J."/>
        </authorList>
    </citation>
    <scope>NUCLEOTIDE SEQUENCE [LARGE SCALE GENOMIC DNA]</scope>
    <source>
        <strain>ATCC 204508 / S288c</strain>
    </source>
</reference>
<reference key="5">
    <citation type="journal article" date="2014" name="G3 (Bethesda)">
        <title>The reference genome sequence of Saccharomyces cerevisiae: Then and now.</title>
        <authorList>
            <person name="Engel S.R."/>
            <person name="Dietrich F.S."/>
            <person name="Fisk D.G."/>
            <person name="Binkley G."/>
            <person name="Balakrishnan R."/>
            <person name="Costanzo M.C."/>
            <person name="Dwight S.S."/>
            <person name="Hitz B.C."/>
            <person name="Karra K."/>
            <person name="Nash R.S."/>
            <person name="Weng S."/>
            <person name="Wong E.D."/>
            <person name="Lloyd P."/>
            <person name="Skrzypek M.S."/>
            <person name="Miyasato S.R."/>
            <person name="Simison M."/>
            <person name="Cherry J.M."/>
        </authorList>
    </citation>
    <scope>GENOME REANNOTATION</scope>
    <source>
        <strain>ATCC 204508 / S288c</strain>
    </source>
</reference>
<reference key="6">
    <citation type="journal article" date="2003" name="Nature">
        <title>Global analysis of protein expression in yeast.</title>
        <authorList>
            <person name="Ghaemmaghami S."/>
            <person name="Huh W.-K."/>
            <person name="Bower K."/>
            <person name="Howson R.W."/>
            <person name="Belle A."/>
            <person name="Dephoure N."/>
            <person name="O'Shea E.K."/>
            <person name="Weissman J.S."/>
        </authorList>
    </citation>
    <scope>LEVEL OF PROTEIN EXPRESSION [LARGE SCALE ANALYSIS]</scope>
</reference>
<reference key="7">
    <citation type="journal article" date="2008" name="Mol. Cell. Proteomics">
        <title>A multidimensional chromatography technology for in-depth phosphoproteome analysis.</title>
        <authorList>
            <person name="Albuquerque C.P."/>
            <person name="Smolka M.B."/>
            <person name="Payne S.H."/>
            <person name="Bafna V."/>
            <person name="Eng J."/>
            <person name="Zhou H."/>
        </authorList>
    </citation>
    <scope>IDENTIFICATION BY MASS SPECTROMETRY [LARGE SCALE ANALYSIS]</scope>
</reference>
<proteinExistence type="evidence at protein level"/>
<accession>P30283</accession>
<accession>D6W4B9</accession>
<evidence type="ECO:0000256" key="1">
    <source>
        <dbReference type="SAM" id="MobiDB-lite"/>
    </source>
</evidence>
<evidence type="ECO:0000269" key="2">
    <source>
    </source>
</evidence>
<evidence type="ECO:0000305" key="3"/>
<name>CGS5_YEAST</name>